<keyword id="KW-0456">Lyase</keyword>
<keyword id="KW-0663">Pyridoxal phosphate</keyword>
<keyword id="KW-1185">Reference proteome</keyword>
<reference key="1">
    <citation type="journal article" date="2000" name="Science">
        <title>The genome sequence of Drosophila melanogaster.</title>
        <authorList>
            <person name="Adams M.D."/>
            <person name="Celniker S.E."/>
            <person name="Holt R.A."/>
            <person name="Evans C.A."/>
            <person name="Gocayne J.D."/>
            <person name="Amanatides P.G."/>
            <person name="Scherer S.E."/>
            <person name="Li P.W."/>
            <person name="Hoskins R.A."/>
            <person name="Galle R.F."/>
            <person name="George R.A."/>
            <person name="Lewis S.E."/>
            <person name="Richards S."/>
            <person name="Ashburner M."/>
            <person name="Henderson S.N."/>
            <person name="Sutton G.G."/>
            <person name="Wortman J.R."/>
            <person name="Yandell M.D."/>
            <person name="Zhang Q."/>
            <person name="Chen L.X."/>
            <person name="Brandon R.C."/>
            <person name="Rogers Y.-H.C."/>
            <person name="Blazej R.G."/>
            <person name="Champe M."/>
            <person name="Pfeiffer B.D."/>
            <person name="Wan K.H."/>
            <person name="Doyle C."/>
            <person name="Baxter E.G."/>
            <person name="Helt G."/>
            <person name="Nelson C.R."/>
            <person name="Miklos G.L.G."/>
            <person name="Abril J.F."/>
            <person name="Agbayani A."/>
            <person name="An H.-J."/>
            <person name="Andrews-Pfannkoch C."/>
            <person name="Baldwin D."/>
            <person name="Ballew R.M."/>
            <person name="Basu A."/>
            <person name="Baxendale J."/>
            <person name="Bayraktaroglu L."/>
            <person name="Beasley E.M."/>
            <person name="Beeson K.Y."/>
            <person name="Benos P.V."/>
            <person name="Berman B.P."/>
            <person name="Bhandari D."/>
            <person name="Bolshakov S."/>
            <person name="Borkova D."/>
            <person name="Botchan M.R."/>
            <person name="Bouck J."/>
            <person name="Brokstein P."/>
            <person name="Brottier P."/>
            <person name="Burtis K.C."/>
            <person name="Busam D.A."/>
            <person name="Butler H."/>
            <person name="Cadieu E."/>
            <person name="Center A."/>
            <person name="Chandra I."/>
            <person name="Cherry J.M."/>
            <person name="Cawley S."/>
            <person name="Dahlke C."/>
            <person name="Davenport L.B."/>
            <person name="Davies P."/>
            <person name="de Pablos B."/>
            <person name="Delcher A."/>
            <person name="Deng Z."/>
            <person name="Mays A.D."/>
            <person name="Dew I."/>
            <person name="Dietz S.M."/>
            <person name="Dodson K."/>
            <person name="Doup L.E."/>
            <person name="Downes M."/>
            <person name="Dugan-Rocha S."/>
            <person name="Dunkov B.C."/>
            <person name="Dunn P."/>
            <person name="Durbin K.J."/>
            <person name="Evangelista C.C."/>
            <person name="Ferraz C."/>
            <person name="Ferriera S."/>
            <person name="Fleischmann W."/>
            <person name="Fosler C."/>
            <person name="Gabrielian A.E."/>
            <person name="Garg N.S."/>
            <person name="Gelbart W.M."/>
            <person name="Glasser K."/>
            <person name="Glodek A."/>
            <person name="Gong F."/>
            <person name="Gorrell J.H."/>
            <person name="Gu Z."/>
            <person name="Guan P."/>
            <person name="Harris M."/>
            <person name="Harris N.L."/>
            <person name="Harvey D.A."/>
            <person name="Heiman T.J."/>
            <person name="Hernandez J.R."/>
            <person name="Houck J."/>
            <person name="Hostin D."/>
            <person name="Houston K.A."/>
            <person name="Howland T.J."/>
            <person name="Wei M.-H."/>
            <person name="Ibegwam C."/>
            <person name="Jalali M."/>
            <person name="Kalush F."/>
            <person name="Karpen G.H."/>
            <person name="Ke Z."/>
            <person name="Kennison J.A."/>
            <person name="Ketchum K.A."/>
            <person name="Kimmel B.E."/>
            <person name="Kodira C.D."/>
            <person name="Kraft C.L."/>
            <person name="Kravitz S."/>
            <person name="Kulp D."/>
            <person name="Lai Z."/>
            <person name="Lasko P."/>
            <person name="Lei Y."/>
            <person name="Levitsky A.A."/>
            <person name="Li J.H."/>
            <person name="Li Z."/>
            <person name="Liang Y."/>
            <person name="Lin X."/>
            <person name="Liu X."/>
            <person name="Mattei B."/>
            <person name="McIntosh T.C."/>
            <person name="McLeod M.P."/>
            <person name="McPherson D."/>
            <person name="Merkulov G."/>
            <person name="Milshina N.V."/>
            <person name="Mobarry C."/>
            <person name="Morris J."/>
            <person name="Moshrefi A."/>
            <person name="Mount S.M."/>
            <person name="Moy M."/>
            <person name="Murphy B."/>
            <person name="Murphy L."/>
            <person name="Muzny D.M."/>
            <person name="Nelson D.L."/>
            <person name="Nelson D.R."/>
            <person name="Nelson K.A."/>
            <person name="Nixon K."/>
            <person name="Nusskern D.R."/>
            <person name="Pacleb J.M."/>
            <person name="Palazzolo M."/>
            <person name="Pittman G.S."/>
            <person name="Pan S."/>
            <person name="Pollard J."/>
            <person name="Puri V."/>
            <person name="Reese M.G."/>
            <person name="Reinert K."/>
            <person name="Remington K."/>
            <person name="Saunders R.D.C."/>
            <person name="Scheeler F."/>
            <person name="Shen H."/>
            <person name="Shue B.C."/>
            <person name="Siden-Kiamos I."/>
            <person name="Simpson M."/>
            <person name="Skupski M.P."/>
            <person name="Smith T.J."/>
            <person name="Spier E."/>
            <person name="Spradling A.C."/>
            <person name="Stapleton M."/>
            <person name="Strong R."/>
            <person name="Sun E."/>
            <person name="Svirskas R."/>
            <person name="Tector C."/>
            <person name="Turner R."/>
            <person name="Venter E."/>
            <person name="Wang A.H."/>
            <person name="Wang X."/>
            <person name="Wang Z.-Y."/>
            <person name="Wassarman D.A."/>
            <person name="Weinstock G.M."/>
            <person name="Weissenbach J."/>
            <person name="Williams S.M."/>
            <person name="Woodage T."/>
            <person name="Worley K.C."/>
            <person name="Wu D."/>
            <person name="Yang S."/>
            <person name="Yao Q.A."/>
            <person name="Ye J."/>
            <person name="Yeh R.-F."/>
            <person name="Zaveri J.S."/>
            <person name="Zhan M."/>
            <person name="Zhang G."/>
            <person name="Zhao Q."/>
            <person name="Zheng L."/>
            <person name="Zheng X.H."/>
            <person name="Zhong F.N."/>
            <person name="Zhong W."/>
            <person name="Zhou X."/>
            <person name="Zhu S.C."/>
            <person name="Zhu X."/>
            <person name="Smith H.O."/>
            <person name="Gibbs R.A."/>
            <person name="Myers E.W."/>
            <person name="Rubin G.M."/>
            <person name="Venter J.C."/>
        </authorList>
    </citation>
    <scope>NUCLEOTIDE SEQUENCE [LARGE SCALE GENOMIC DNA]</scope>
    <source>
        <strain>Berkeley</strain>
    </source>
</reference>
<reference key="2">
    <citation type="journal article" date="2002" name="Genome Biol.">
        <title>Annotation of the Drosophila melanogaster euchromatic genome: a systematic review.</title>
        <authorList>
            <person name="Misra S."/>
            <person name="Crosby M.A."/>
            <person name="Mungall C.J."/>
            <person name="Matthews B.B."/>
            <person name="Campbell K.S."/>
            <person name="Hradecky P."/>
            <person name="Huang Y."/>
            <person name="Kaminker J.S."/>
            <person name="Millburn G.H."/>
            <person name="Prochnik S.E."/>
            <person name="Smith C.D."/>
            <person name="Tupy J.L."/>
            <person name="Whitfield E.J."/>
            <person name="Bayraktaroglu L."/>
            <person name="Berman B.P."/>
            <person name="Bettencourt B.R."/>
            <person name="Celniker S.E."/>
            <person name="de Grey A.D.N.J."/>
            <person name="Drysdale R.A."/>
            <person name="Harris N.L."/>
            <person name="Richter J."/>
            <person name="Russo S."/>
            <person name="Schroeder A.J."/>
            <person name="Shu S.Q."/>
            <person name="Stapleton M."/>
            <person name="Yamada C."/>
            <person name="Ashburner M."/>
            <person name="Gelbart W.M."/>
            <person name="Rubin G.M."/>
            <person name="Lewis S.E."/>
        </authorList>
    </citation>
    <scope>GENOME REANNOTATION</scope>
    <source>
        <strain>Berkeley</strain>
    </source>
</reference>
<reference key="3">
    <citation type="journal article" date="2002" name="Genome Biol.">
        <title>A Drosophila full-length cDNA resource.</title>
        <authorList>
            <person name="Stapleton M."/>
            <person name="Carlson J.W."/>
            <person name="Brokstein P."/>
            <person name="Yu C."/>
            <person name="Champe M."/>
            <person name="George R.A."/>
            <person name="Guarin H."/>
            <person name="Kronmiller B."/>
            <person name="Pacleb J.M."/>
            <person name="Park S."/>
            <person name="Wan K.H."/>
            <person name="Rubin G.M."/>
            <person name="Celniker S.E."/>
        </authorList>
    </citation>
    <scope>NUCLEOTIDE SEQUENCE [LARGE SCALE MRNA]</scope>
    <source>
        <strain>Berkeley</strain>
        <tissue>Embryo</tissue>
    </source>
</reference>
<accession>Q9VU95</accession>
<accession>Q95RV4</accession>
<dbReference type="EC" id="4.2.3.-" evidence="3"/>
<dbReference type="EMBL" id="AE014296">
    <property type="protein sequence ID" value="AAF49794.2"/>
    <property type="molecule type" value="Genomic_DNA"/>
</dbReference>
<dbReference type="EMBL" id="AY061111">
    <property type="protein sequence ID" value="AAL28659.1"/>
    <property type="molecule type" value="mRNA"/>
</dbReference>
<dbReference type="RefSeq" id="NP_648665.1">
    <property type="nucleotide sequence ID" value="NM_140408.3"/>
</dbReference>
<dbReference type="SMR" id="Q9VU95"/>
<dbReference type="BioGRID" id="64872">
    <property type="interactions" value="15"/>
</dbReference>
<dbReference type="FunCoup" id="Q9VU95">
    <property type="interactions" value="180"/>
</dbReference>
<dbReference type="IntAct" id="Q9VU95">
    <property type="interactions" value="12"/>
</dbReference>
<dbReference type="STRING" id="7227.FBpp0075543"/>
<dbReference type="PaxDb" id="7227-FBpp0075543"/>
<dbReference type="DNASU" id="39530"/>
<dbReference type="EnsemblMetazoa" id="FBtr0075801">
    <property type="protein sequence ID" value="FBpp0075543"/>
    <property type="gene ID" value="FBgn0036381"/>
</dbReference>
<dbReference type="GeneID" id="39530"/>
<dbReference type="KEGG" id="dme:Dmel_CG8745"/>
<dbReference type="UCSC" id="CG8745-RA">
    <property type="organism name" value="d. melanogaster"/>
</dbReference>
<dbReference type="AGR" id="FB:FBgn0036381"/>
<dbReference type="FlyBase" id="FBgn0036381">
    <property type="gene designation" value="CG8745"/>
</dbReference>
<dbReference type="VEuPathDB" id="VectorBase:FBgn0036381"/>
<dbReference type="eggNOG" id="KOG1403">
    <property type="taxonomic scope" value="Eukaryota"/>
</dbReference>
<dbReference type="GeneTree" id="ENSGT00940000171040"/>
<dbReference type="HOGENOM" id="CLU_016922_8_0_1"/>
<dbReference type="InParanoid" id="Q9VU95"/>
<dbReference type="OMA" id="GAIETMK"/>
<dbReference type="OrthoDB" id="10261433at2759"/>
<dbReference type="PhylomeDB" id="Q9VU95"/>
<dbReference type="Reactome" id="R-DME-1442490">
    <property type="pathway name" value="Collagen degradation"/>
</dbReference>
<dbReference type="Reactome" id="R-DME-1483213">
    <property type="pathway name" value="Synthesis of PE"/>
</dbReference>
<dbReference type="Reactome" id="R-DME-71064">
    <property type="pathway name" value="Lysine catabolism"/>
</dbReference>
<dbReference type="BioGRID-ORCS" id="39530">
    <property type="hits" value="0 hits in 3 CRISPR screens"/>
</dbReference>
<dbReference type="GenomeRNAi" id="39530"/>
<dbReference type="PRO" id="PR:Q9VU95"/>
<dbReference type="Proteomes" id="UP000000803">
    <property type="component" value="Chromosome 3L"/>
</dbReference>
<dbReference type="Bgee" id="FBgn0036381">
    <property type="expression patterns" value="Expressed in adult Malpighian tubule principal cell of lower segment in Malpighian tubule and 182 other cell types or tissues"/>
</dbReference>
<dbReference type="GO" id="GO:0050459">
    <property type="term" value="F:ethanolamine-phosphate phospho-lyase activity"/>
    <property type="evidence" value="ECO:0000250"/>
    <property type="project" value="FlyBase"/>
</dbReference>
<dbReference type="GO" id="GO:0030170">
    <property type="term" value="F:pyridoxal phosphate binding"/>
    <property type="evidence" value="ECO:0007669"/>
    <property type="project" value="InterPro"/>
</dbReference>
<dbReference type="GO" id="GO:0008483">
    <property type="term" value="F:transaminase activity"/>
    <property type="evidence" value="ECO:0007669"/>
    <property type="project" value="InterPro"/>
</dbReference>
<dbReference type="GO" id="GO:0035094">
    <property type="term" value="P:response to nicotine"/>
    <property type="evidence" value="ECO:0000270"/>
    <property type="project" value="FlyBase"/>
</dbReference>
<dbReference type="CDD" id="cd00610">
    <property type="entry name" value="OAT_like"/>
    <property type="match status" value="1"/>
</dbReference>
<dbReference type="FunFam" id="3.40.640.10:FF:000058">
    <property type="entry name" value="ethanolamine-phosphate phospho-lyase isoform X1"/>
    <property type="match status" value="1"/>
</dbReference>
<dbReference type="Gene3D" id="3.90.1150.10">
    <property type="entry name" value="Aspartate Aminotransferase, domain 1"/>
    <property type="match status" value="1"/>
</dbReference>
<dbReference type="Gene3D" id="3.40.640.10">
    <property type="entry name" value="Type I PLP-dependent aspartate aminotransferase-like (Major domain)"/>
    <property type="match status" value="1"/>
</dbReference>
<dbReference type="InterPro" id="IPR005814">
    <property type="entry name" value="Aminotrans_3"/>
</dbReference>
<dbReference type="InterPro" id="IPR049704">
    <property type="entry name" value="Aminotrans_3_PPA_site"/>
</dbReference>
<dbReference type="InterPro" id="IPR015424">
    <property type="entry name" value="PyrdxlP-dep_Trfase"/>
</dbReference>
<dbReference type="InterPro" id="IPR015421">
    <property type="entry name" value="PyrdxlP-dep_Trfase_major"/>
</dbReference>
<dbReference type="InterPro" id="IPR015422">
    <property type="entry name" value="PyrdxlP-dep_Trfase_small"/>
</dbReference>
<dbReference type="PANTHER" id="PTHR45688">
    <property type="match status" value="1"/>
</dbReference>
<dbReference type="PANTHER" id="PTHR45688:SF13">
    <property type="entry name" value="ALANINE--GLYOXYLATE AMINOTRANSFERASE 2-LIKE"/>
    <property type="match status" value="1"/>
</dbReference>
<dbReference type="Pfam" id="PF00202">
    <property type="entry name" value="Aminotran_3"/>
    <property type="match status" value="1"/>
</dbReference>
<dbReference type="PIRSF" id="PIRSF000521">
    <property type="entry name" value="Transaminase_4ab_Lys_Orn"/>
    <property type="match status" value="1"/>
</dbReference>
<dbReference type="SUPFAM" id="SSF53383">
    <property type="entry name" value="PLP-dependent transferases"/>
    <property type="match status" value="1"/>
</dbReference>
<dbReference type="PROSITE" id="PS00600">
    <property type="entry name" value="AA_TRANSFER_CLASS_3"/>
    <property type="match status" value="1"/>
</dbReference>
<organism>
    <name type="scientific">Drosophila melanogaster</name>
    <name type="common">Fruit fly</name>
    <dbReference type="NCBI Taxonomy" id="7227"/>
    <lineage>
        <taxon>Eukaryota</taxon>
        <taxon>Metazoa</taxon>
        <taxon>Ecdysozoa</taxon>
        <taxon>Arthropoda</taxon>
        <taxon>Hexapoda</taxon>
        <taxon>Insecta</taxon>
        <taxon>Pterygota</taxon>
        <taxon>Neoptera</taxon>
        <taxon>Endopterygota</taxon>
        <taxon>Diptera</taxon>
        <taxon>Brachycera</taxon>
        <taxon>Muscomorpha</taxon>
        <taxon>Ephydroidea</taxon>
        <taxon>Drosophilidae</taxon>
        <taxon>Drosophila</taxon>
        <taxon>Sophophora</taxon>
    </lineage>
</organism>
<gene>
    <name type="ORF">CG8745</name>
</gene>
<protein>
    <recommendedName>
        <fullName evidence="2">Alanine--glyoxylate aminotransferase 2-like</fullName>
        <ecNumber evidence="3">4.2.3.-</ecNumber>
    </recommendedName>
</protein>
<sequence length="494" mass="54284">MPFAHEQLNLVASEQLSKTETIKLRNQHIGQACQLFYRSDPLKIVRGQGQYMFDEEGTRYLDCINNVAHVGHCHPEVVRAGALQMATISTNNRFLHDELVQCARTLTSKMPEPLSVCFFVNSGSEANDLALRLARNFTKRQDVITLDHAYHGHLQSVMEVSPYKFNQPGGEAKPDYVHVAPCPDVYGGKFTDKMYPDADMGALYAQPIEEICQKQLAKGQGVAAFIAESLQSCGGQILPPAGYFQAVYDAVRSAGGVCIADEVQVGFGRVGSHYWAFETQNVIPDIVCVAKPMGNGHPVGAVVTTPEIAQAFHATGVAYFNTYGGNPVSCAIANAVMRVIEEEGLQQKALVLGDYLLEECNRLKQEFECIGDVRGAGLFVGIELVQDRKERIPDKKAAHWVVNRMKQLHRVLVSSDGPNDNVIKLKPPMCFNRENADEFLLGFRECLTAVMQERLASATSAAMAATSGVIATATETLANKTKLFERQDRLIKSV</sequence>
<feature type="chain" id="PRO_0000287669" description="Alanine--glyoxylate aminotransferase 2-like">
    <location>
        <begin position="1"/>
        <end position="494"/>
    </location>
</feature>
<feature type="modified residue" description="N6-(pyridoxal phosphate)lysine" evidence="1">
    <location>
        <position position="291"/>
    </location>
</feature>
<proteinExistence type="evidence at transcript level"/>
<name>AGT2L_DROME</name>
<evidence type="ECO:0000250" key="1"/>
<evidence type="ECO:0000250" key="2">
    <source>
        <dbReference type="UniProtKB" id="Q8TBG4"/>
    </source>
</evidence>
<evidence type="ECO:0000305" key="3"/>
<comment type="cofactor">
    <cofactor evidence="2">
        <name>pyridoxal 5'-phosphate</name>
        <dbReference type="ChEBI" id="CHEBI:597326"/>
    </cofactor>
</comment>
<comment type="similarity">
    <text evidence="3">Belongs to the class-III pyridoxal-phosphate-dependent aminotransferase family.</text>
</comment>
<comment type="caution">
    <text evidence="2">Does not seem to possess aminotransferase activity.</text>
</comment>